<gene>
    <name type="primary">Il4</name>
    <name type="synonym">Il-4</name>
</gene>
<dbReference type="EMBL" id="X03532">
    <property type="protein sequence ID" value="CAA27233.1"/>
    <property type="molecule type" value="mRNA"/>
</dbReference>
<dbReference type="EMBL" id="X05064">
    <property type="protein sequence ID" value="CAA28731.1"/>
    <property type="molecule type" value="Genomic_DNA"/>
</dbReference>
<dbReference type="EMBL" id="X05252">
    <property type="protein sequence ID" value="CAA28873.1"/>
    <property type="status" value="ALT_SEQ"/>
    <property type="molecule type" value="Genomic_DNA"/>
</dbReference>
<dbReference type="EMBL" id="X05253">
    <property type="protein sequence ID" value="CAA28874.1"/>
    <property type="status" value="ALT_SEQ"/>
    <property type="molecule type" value="Genomic_DNA"/>
</dbReference>
<dbReference type="EMBL" id="M13238">
    <property type="protein sequence ID" value="AAA39307.1"/>
    <property type="molecule type" value="mRNA"/>
</dbReference>
<dbReference type="EMBL" id="M25892">
    <property type="protein sequence ID" value="AAA39298.1"/>
    <property type="molecule type" value="mRNA"/>
</dbReference>
<dbReference type="EMBL" id="BC027514">
    <property type="protein sequence ID" value="AAH27514.1"/>
    <property type="molecule type" value="mRNA"/>
</dbReference>
<dbReference type="CCDS" id="CCDS24682.1"/>
<dbReference type="PIR" id="A25870">
    <property type="entry name" value="IIMSG1"/>
</dbReference>
<dbReference type="RefSeq" id="NP_067258.1">
    <property type="nucleotide sequence ID" value="NM_021283.2"/>
</dbReference>
<dbReference type="SMR" id="P07750"/>
<dbReference type="FunCoup" id="P07750">
    <property type="interactions" value="712"/>
</dbReference>
<dbReference type="IntAct" id="P07750">
    <property type="interactions" value="1"/>
</dbReference>
<dbReference type="STRING" id="10090.ENSMUSP00000000889"/>
<dbReference type="GlyCosmos" id="P07750">
    <property type="glycosylation" value="3 sites, No reported glycans"/>
</dbReference>
<dbReference type="GlyGen" id="P07750">
    <property type="glycosylation" value="4 sites"/>
</dbReference>
<dbReference type="PhosphoSitePlus" id="P07750"/>
<dbReference type="PaxDb" id="10090-ENSMUSP00000000889"/>
<dbReference type="ABCD" id="P07750">
    <property type="antibodies" value="1 sequenced antibody"/>
</dbReference>
<dbReference type="Antibodypedia" id="14502">
    <property type="antibodies" value="1893 antibodies from 51 providers"/>
</dbReference>
<dbReference type="DNASU" id="16189"/>
<dbReference type="Ensembl" id="ENSMUST00000000889.7">
    <property type="protein sequence ID" value="ENSMUSP00000000889.7"/>
    <property type="gene ID" value="ENSMUSG00000000869.13"/>
</dbReference>
<dbReference type="GeneID" id="16189"/>
<dbReference type="KEGG" id="mmu:16189"/>
<dbReference type="UCSC" id="uc007iwq.2">
    <property type="organism name" value="mouse"/>
</dbReference>
<dbReference type="AGR" id="MGI:96556"/>
<dbReference type="CTD" id="3565"/>
<dbReference type="MGI" id="MGI:96556">
    <property type="gene designation" value="Il4"/>
</dbReference>
<dbReference type="VEuPathDB" id="HostDB:ENSMUSG00000000869"/>
<dbReference type="eggNOG" id="KOG3886">
    <property type="taxonomic scope" value="Eukaryota"/>
</dbReference>
<dbReference type="GeneTree" id="ENSGT00390000013108"/>
<dbReference type="HOGENOM" id="CLU_154691_0_0_1"/>
<dbReference type="InParanoid" id="P07750"/>
<dbReference type="OMA" id="GTPCTEM"/>
<dbReference type="OrthoDB" id="9528087at2759"/>
<dbReference type="PhylomeDB" id="P07750"/>
<dbReference type="TreeFam" id="TF336383"/>
<dbReference type="Reactome" id="R-MMU-6785807">
    <property type="pathway name" value="Interleukin-4 and Interleukin-13 signaling"/>
</dbReference>
<dbReference type="BioGRID-ORCS" id="16189">
    <property type="hits" value="0 hits in 113 CRISPR screens"/>
</dbReference>
<dbReference type="ChiTaRS" id="Il4">
    <property type="organism name" value="mouse"/>
</dbReference>
<dbReference type="PRO" id="PR:P07750"/>
<dbReference type="Proteomes" id="UP000000589">
    <property type="component" value="Chromosome 11"/>
</dbReference>
<dbReference type="RNAct" id="P07750">
    <property type="molecule type" value="protein"/>
</dbReference>
<dbReference type="Bgee" id="ENSMUSG00000000869">
    <property type="expression patterns" value="Expressed in embryonic brain and 68 other cell types or tissues"/>
</dbReference>
<dbReference type="ExpressionAtlas" id="P07750">
    <property type="expression patterns" value="baseline and differential"/>
</dbReference>
<dbReference type="GO" id="GO:0009897">
    <property type="term" value="C:external side of plasma membrane"/>
    <property type="evidence" value="ECO:0000314"/>
    <property type="project" value="MGI"/>
</dbReference>
<dbReference type="GO" id="GO:0005615">
    <property type="term" value="C:extracellular space"/>
    <property type="evidence" value="ECO:0000314"/>
    <property type="project" value="MGI"/>
</dbReference>
<dbReference type="GO" id="GO:0005125">
    <property type="term" value="F:cytokine activity"/>
    <property type="evidence" value="ECO:0000314"/>
    <property type="project" value="MGI"/>
</dbReference>
<dbReference type="GO" id="GO:0008083">
    <property type="term" value="F:growth factor activity"/>
    <property type="evidence" value="ECO:0007669"/>
    <property type="project" value="UniProtKB-KW"/>
</dbReference>
<dbReference type="GO" id="GO:0005136">
    <property type="term" value="F:interleukin-4 receptor binding"/>
    <property type="evidence" value="ECO:0007669"/>
    <property type="project" value="InterPro"/>
</dbReference>
<dbReference type="GO" id="GO:0050798">
    <property type="term" value="P:activated T cell proliferation"/>
    <property type="evidence" value="ECO:0000314"/>
    <property type="project" value="MGI"/>
</dbReference>
<dbReference type="GO" id="GO:0006914">
    <property type="term" value="P:autophagy"/>
    <property type="evidence" value="ECO:0007669"/>
    <property type="project" value="UniProtKB-KW"/>
</dbReference>
<dbReference type="GO" id="GO:0042113">
    <property type="term" value="P:B cell activation"/>
    <property type="evidence" value="ECO:0000314"/>
    <property type="project" value="MGI"/>
</dbReference>
<dbReference type="GO" id="GO:0031296">
    <property type="term" value="P:B cell costimulation"/>
    <property type="evidence" value="ECO:0000314"/>
    <property type="project" value="MGI"/>
</dbReference>
<dbReference type="GO" id="GO:0042100">
    <property type="term" value="P:B cell proliferation"/>
    <property type="evidence" value="ECO:0000314"/>
    <property type="project" value="MGI"/>
</dbReference>
<dbReference type="GO" id="GO:0008203">
    <property type="term" value="P:cholesterol metabolic process"/>
    <property type="evidence" value="ECO:0000315"/>
    <property type="project" value="UniProtKB"/>
</dbReference>
<dbReference type="GO" id="GO:0042832">
    <property type="term" value="P:defense response to protozoan"/>
    <property type="evidence" value="ECO:0000315"/>
    <property type="project" value="MGI"/>
</dbReference>
<dbReference type="GO" id="GO:0097191">
    <property type="term" value="P:extrinsic apoptotic signaling pathway"/>
    <property type="evidence" value="ECO:0000314"/>
    <property type="project" value="MGI"/>
</dbReference>
<dbReference type="GO" id="GO:0097192">
    <property type="term" value="P:extrinsic apoptotic signaling pathway in absence of ligand"/>
    <property type="evidence" value="ECO:0000314"/>
    <property type="project" value="MGI"/>
</dbReference>
<dbReference type="GO" id="GO:0002227">
    <property type="term" value="P:innate immune response in mucosa"/>
    <property type="evidence" value="ECO:0000314"/>
    <property type="project" value="BHF-UCL"/>
</dbReference>
<dbReference type="GO" id="GO:0048289">
    <property type="term" value="P:isotype switching to IgE isotypes"/>
    <property type="evidence" value="ECO:0000314"/>
    <property type="project" value="MGI"/>
</dbReference>
<dbReference type="GO" id="GO:0048291">
    <property type="term" value="P:isotype switching to IgG isotypes"/>
    <property type="evidence" value="ECO:0000314"/>
    <property type="project" value="MGI"/>
</dbReference>
<dbReference type="GO" id="GO:0045342">
    <property type="term" value="P:MHC class II biosynthetic process"/>
    <property type="evidence" value="ECO:0000314"/>
    <property type="project" value="MGI"/>
</dbReference>
<dbReference type="GO" id="GO:2001237">
    <property type="term" value="P:negative regulation of extrinsic apoptotic signaling pathway"/>
    <property type="evidence" value="ECO:0000314"/>
    <property type="project" value="MGI"/>
</dbReference>
<dbReference type="GO" id="GO:0045671">
    <property type="term" value="P:negative regulation of osteoclast differentiation"/>
    <property type="evidence" value="ECO:0000314"/>
    <property type="project" value="MGI"/>
</dbReference>
<dbReference type="GO" id="GO:0050868">
    <property type="term" value="P:negative regulation of T cell activation"/>
    <property type="evidence" value="ECO:0000314"/>
    <property type="project" value="MGI"/>
</dbReference>
<dbReference type="GO" id="GO:2000320">
    <property type="term" value="P:negative regulation of T-helper 17 cell differentiation"/>
    <property type="evidence" value="ECO:0000314"/>
    <property type="project" value="MGI"/>
</dbReference>
<dbReference type="GO" id="GO:0032720">
    <property type="term" value="P:negative regulation of tumor necrosis factor production"/>
    <property type="evidence" value="ECO:0000314"/>
    <property type="project" value="ARUK-UCL"/>
</dbReference>
<dbReference type="GO" id="GO:0070351">
    <property type="term" value="P:negative regulation of white fat cell proliferation"/>
    <property type="evidence" value="ECO:0000314"/>
    <property type="project" value="CACAO"/>
</dbReference>
<dbReference type="GO" id="GO:0042104">
    <property type="term" value="P:positive regulation of activated T cell proliferation"/>
    <property type="evidence" value="ECO:0000314"/>
    <property type="project" value="MGI"/>
</dbReference>
<dbReference type="GO" id="GO:1900223">
    <property type="term" value="P:positive regulation of amyloid-beta clearance"/>
    <property type="evidence" value="ECO:0000314"/>
    <property type="project" value="ARUK-UCL"/>
</dbReference>
<dbReference type="GO" id="GO:2001171">
    <property type="term" value="P:positive regulation of ATP biosynthetic process"/>
    <property type="evidence" value="ECO:0000314"/>
    <property type="project" value="ARUK-UCL"/>
</dbReference>
<dbReference type="GO" id="GO:0050871">
    <property type="term" value="P:positive regulation of B cell activation"/>
    <property type="evidence" value="ECO:0000314"/>
    <property type="project" value="MGI"/>
</dbReference>
<dbReference type="GO" id="GO:2000538">
    <property type="term" value="P:positive regulation of B cell chemotaxis"/>
    <property type="evidence" value="ECO:0000316"/>
    <property type="project" value="MGI"/>
</dbReference>
<dbReference type="GO" id="GO:0030890">
    <property type="term" value="P:positive regulation of B cell proliferation"/>
    <property type="evidence" value="ECO:0000314"/>
    <property type="project" value="MGI"/>
</dbReference>
<dbReference type="GO" id="GO:1901857">
    <property type="term" value="P:positive regulation of cellular respiration"/>
    <property type="evidence" value="ECO:0000314"/>
    <property type="project" value="ARUK-UCL"/>
</dbReference>
<dbReference type="GO" id="GO:0032722">
    <property type="term" value="P:positive regulation of chemokine production"/>
    <property type="evidence" value="ECO:0000314"/>
    <property type="project" value="BHF-UCL"/>
</dbReference>
<dbReference type="GO" id="GO:0120162">
    <property type="term" value="P:positive regulation of cold-induced thermogenesis"/>
    <property type="evidence" value="ECO:0000315"/>
    <property type="project" value="YuBioLab"/>
</dbReference>
<dbReference type="GO" id="GO:0051091">
    <property type="term" value="P:positive regulation of DNA-binding transcription factor activity"/>
    <property type="evidence" value="ECO:0000314"/>
    <property type="project" value="BHF-UCL"/>
</dbReference>
<dbReference type="GO" id="GO:0045893">
    <property type="term" value="P:positive regulation of DNA-templated transcription"/>
    <property type="evidence" value="ECO:0000314"/>
    <property type="project" value="UniProtKB"/>
</dbReference>
<dbReference type="GO" id="GO:0010628">
    <property type="term" value="P:positive regulation of gene expression"/>
    <property type="evidence" value="ECO:0000314"/>
    <property type="project" value="ARUK-UCL"/>
</dbReference>
<dbReference type="GO" id="GO:0002639">
    <property type="term" value="P:positive regulation of immunoglobulin production"/>
    <property type="evidence" value="ECO:0000315"/>
    <property type="project" value="MGI"/>
</dbReference>
<dbReference type="GO" id="GO:0048295">
    <property type="term" value="P:positive regulation of isotype switching to IgE isotypes"/>
    <property type="evidence" value="ECO:0000314"/>
    <property type="project" value="MGI"/>
</dbReference>
<dbReference type="GO" id="GO:0048304">
    <property type="term" value="P:positive regulation of isotype switching to IgG isotypes"/>
    <property type="evidence" value="ECO:0000314"/>
    <property type="project" value="MGI"/>
</dbReference>
<dbReference type="GO" id="GO:0016239">
    <property type="term" value="P:positive regulation of macroautophagy"/>
    <property type="evidence" value="ECO:0000314"/>
    <property type="project" value="UniProtKB"/>
</dbReference>
<dbReference type="GO" id="GO:0043306">
    <property type="term" value="P:positive regulation of mast cell degranulation"/>
    <property type="evidence" value="ECO:0000315"/>
    <property type="project" value="MGI"/>
</dbReference>
<dbReference type="GO" id="GO:0045348">
    <property type="term" value="P:positive regulation of MHC class II biosynthetic process"/>
    <property type="evidence" value="ECO:0000314"/>
    <property type="project" value="MGI"/>
</dbReference>
<dbReference type="GO" id="GO:1901741">
    <property type="term" value="P:positive regulation of myoblast fusion"/>
    <property type="evidence" value="ECO:0000314"/>
    <property type="project" value="MGI"/>
</dbReference>
<dbReference type="GO" id="GO:0048260">
    <property type="term" value="P:positive regulation of receptor-mediated endocytosis"/>
    <property type="evidence" value="ECO:0000314"/>
    <property type="project" value="ARUK-UCL"/>
</dbReference>
<dbReference type="GO" id="GO:0042102">
    <property type="term" value="P:positive regulation of T cell proliferation"/>
    <property type="evidence" value="ECO:0000314"/>
    <property type="project" value="MGI"/>
</dbReference>
<dbReference type="GO" id="GO:0045944">
    <property type="term" value="P:positive regulation of transcription by RNA polymerase II"/>
    <property type="evidence" value="ECO:0000314"/>
    <property type="project" value="BHF-UCL"/>
</dbReference>
<dbReference type="GO" id="GO:0050776">
    <property type="term" value="P:regulation of immune response"/>
    <property type="evidence" value="ECO:0000314"/>
    <property type="project" value="MGI"/>
</dbReference>
<dbReference type="GO" id="GO:0009624">
    <property type="term" value="P:response to nematode"/>
    <property type="evidence" value="ECO:0000314"/>
    <property type="project" value="MGI"/>
</dbReference>
<dbReference type="GO" id="GO:0010269">
    <property type="term" value="P:response to selenium ion"/>
    <property type="evidence" value="ECO:0000314"/>
    <property type="project" value="MGI"/>
</dbReference>
<dbReference type="GO" id="GO:0042098">
    <property type="term" value="P:T cell proliferation"/>
    <property type="evidence" value="ECO:0000314"/>
    <property type="project" value="MGI"/>
</dbReference>
<dbReference type="GO" id="GO:0002296">
    <property type="term" value="P:T-helper 1 cell lineage commitment"/>
    <property type="evidence" value="ECO:0000316"/>
    <property type="project" value="MGI"/>
</dbReference>
<dbReference type="GO" id="GO:0045064">
    <property type="term" value="P:T-helper 2 cell differentiation"/>
    <property type="evidence" value="ECO:0000314"/>
    <property type="project" value="MGI"/>
</dbReference>
<dbReference type="GO" id="GO:0006366">
    <property type="term" value="P:transcription by RNA polymerase II"/>
    <property type="evidence" value="ECO:0000314"/>
    <property type="project" value="MGI"/>
</dbReference>
<dbReference type="FunFam" id="1.20.1250.10:FF:000014">
    <property type="entry name" value="Interleukin-4"/>
    <property type="match status" value="1"/>
</dbReference>
<dbReference type="Gene3D" id="1.20.1250.10">
    <property type="match status" value="1"/>
</dbReference>
<dbReference type="InterPro" id="IPR009079">
    <property type="entry name" value="4_helix_cytokine-like_core"/>
</dbReference>
<dbReference type="InterPro" id="IPR002354">
    <property type="entry name" value="IL-4"/>
</dbReference>
<dbReference type="InterPro" id="IPR001325">
    <property type="entry name" value="IL-4/IL-13"/>
</dbReference>
<dbReference type="InterPro" id="IPR018096">
    <property type="entry name" value="IL-4/IL-13_CS"/>
</dbReference>
<dbReference type="PANTHER" id="PTHR47401">
    <property type="entry name" value="INTERLEUKIN-4"/>
    <property type="match status" value="1"/>
</dbReference>
<dbReference type="PANTHER" id="PTHR47401:SF1">
    <property type="entry name" value="INTERLEUKIN-4"/>
    <property type="match status" value="1"/>
</dbReference>
<dbReference type="Pfam" id="PF00727">
    <property type="entry name" value="IL4"/>
    <property type="match status" value="1"/>
</dbReference>
<dbReference type="PIRSF" id="PIRSF001941">
    <property type="entry name" value="Interleukin_4"/>
    <property type="match status" value="1"/>
</dbReference>
<dbReference type="PRINTS" id="PR00431">
    <property type="entry name" value="INTERLEUKIN4"/>
</dbReference>
<dbReference type="SMART" id="SM00190">
    <property type="entry name" value="IL4_13"/>
    <property type="match status" value="1"/>
</dbReference>
<dbReference type="SUPFAM" id="SSF47266">
    <property type="entry name" value="4-helical cytokines"/>
    <property type="match status" value="1"/>
</dbReference>
<dbReference type="PROSITE" id="PS00838">
    <property type="entry name" value="INTERLEUKIN_4_13"/>
    <property type="match status" value="1"/>
</dbReference>
<comment type="function">
    <text evidence="1 4 5 6 7 8 9">Cytokine secreted primarily by mast cells, T-cells, eosinophils, and basophils that plays a role in regulating antibody production, hematopoiesis and inflammation, and the development of effector T-cell responses (PubMed:3083412). Induces the expression of class II MHC molecules on resting B-cells (PubMed:3498301). Enhances both secretion and cell surface expression of IgE and IgG1 (PubMed:3498301). Also regulates the expression of the low affinity Fc receptor for IgE (CD23) on both lymphocytes and monocytes (By similarity). Positively regulates IL31RA expression in macrophages. Stimulates autophagy in dendritic cells by interfering with mTORC1 signaling and through the induction of RUFY4 (PubMed:26416964). In addition, plays a critical role in higher functions of the normal brain, such as memory and learning (PubMed:25772794, PubMed:28202615). Upon binding to IL4, IL4R receptor dimerizes either with the common IL2R gamma chain/IL2RG to produce the type 1 signaling complex, located mainly on hematopoietic cells, or with the IL13RA1 to produce the type 2 complex, which is also expressed on nonhematopoietic cells. Engagement of both types of receptors initiates JAK3 and to a lower extend JAK1 phosphorylation leading to activation of the signal transducer and activator of transcription 6/STAT6 (PubMed:25847241, PubMed:8624821).</text>
</comment>
<comment type="subunit">
    <text evidence="1 4 5 6 7 8 9">Interacts with IL4R. Interacts with IL13RA1.</text>
</comment>
<comment type="subcellular location">
    <subcellularLocation>
        <location>Secreted</location>
    </subcellularLocation>
</comment>
<comment type="disruption phenotype">
    <text evidence="4 6">Deletion mutant mice demonstrate anxiety-like behavior in comparison to WT mice (PubMed:25772794). In addition, they show impaired cognitive function (PubMed:28202615).</text>
</comment>
<comment type="similarity">
    <text evidence="10">Belongs to the IL-4/IL-13 family.</text>
</comment>
<reference key="1">
    <citation type="journal article" date="1986" name="Nature">
        <title>Cloning of cDNA encoding the murine IgG1 induction factor by a novel strategy using SP6 promoter.</title>
        <authorList>
            <person name="Noma Y."/>
            <person name="Sideras P."/>
            <person name="Naito T."/>
            <person name="Bergstedt-Lindqvist S."/>
            <person name="Azuma C."/>
            <person name="Severinson E."/>
            <person name="Tanabe T."/>
            <person name="Kinashi T."/>
            <person name="Matsuda F."/>
            <person name="Yaoita Y."/>
            <person name="Honjo T."/>
        </authorList>
    </citation>
    <scope>NUCLEOTIDE SEQUENCE [MRNA]</scope>
</reference>
<reference key="2">
    <citation type="journal article" date="1987" name="Nucleic Acids Res.">
        <title>Structural analysis of the mouse chromosomal gene encoding interleukin 4 which expresses B cell, T cell and mast cell stimulating activities.</title>
        <authorList>
            <person name="Otsuka T."/>
            <person name="Villaret D."/>
            <person name="Yokota T."/>
            <person name="Takebe Y."/>
            <person name="Lee F."/>
            <person name="Arai N."/>
            <person name="Arai K."/>
        </authorList>
    </citation>
    <scope>NUCLEOTIDE SEQUENCE [GENOMIC DNA]</scope>
    <source>
        <strain>BALB/cJ</strain>
    </source>
</reference>
<reference key="3">
    <citation type="journal article" date="1986" name="Proc. Natl. Acad. Sci. U.S.A.">
        <title>Isolation and characterization of a mouse interleukin cDNA clone that expresses B-cell stimulatory factor 1 activities and T-cell- and mast-cell-stimulating activities.</title>
        <authorList>
            <person name="Lee F."/>
            <person name="Yokota T."/>
            <person name="Otsuka T."/>
            <person name="Meyerson P."/>
            <person name="Villaret D."/>
            <person name="Coffman R."/>
            <person name="Mosmann T."/>
            <person name="Rennick D."/>
            <person name="Roehm N."/>
            <person name="Smith C."/>
            <person name="Zlotnik A."/>
            <person name="Arai K."/>
        </authorList>
    </citation>
    <scope>NUCLEOTIDE SEQUENCE [MRNA]</scope>
    <scope>FUNCTION</scope>
</reference>
<reference key="4">
    <citation type="journal article" date="1987" name="Adv. Exp. Med. Biol.">
        <title>IgG1 induction factor: a single molecular entity with multiple biological functions.</title>
        <authorList>
            <person name="Sideras P."/>
            <person name="Bergstedt-Lindqvist S."/>
            <person name="Severinson E."/>
            <person name="Noma Y."/>
            <person name="Naito T."/>
            <person name="Azuma C."/>
            <person name="Tanabe T."/>
            <person name="Kinashi T."/>
            <person name="Matsude F."/>
            <person name="Yaoita Y."/>
            <person name="Honjo T."/>
        </authorList>
    </citation>
    <scope>NUCLEOTIDE SEQUENCE [MRNA]</scope>
    <scope>FUNCTION</scope>
</reference>
<reference key="5">
    <citation type="journal article" date="2004" name="Genome Res.">
        <title>The status, quality, and expansion of the NIH full-length cDNA project: the Mammalian Gene Collection (MGC).</title>
        <authorList>
            <consortium name="The MGC Project Team"/>
        </authorList>
    </citation>
    <scope>NUCLEOTIDE SEQUENCE [LARGE SCALE MRNA]</scope>
    <source>
        <strain>C57BL/6J</strain>
        <tissue>Thymus</tissue>
    </source>
</reference>
<reference key="6">
    <citation type="journal article" date="1991" name="Biochemistry">
        <title>Disulfide assignments in recombinant mouse and human interleukin 4.</title>
        <authorList>
            <person name="Carr C."/>
            <person name="Aykent S."/>
            <person name="Kimack N.M."/>
            <person name="Levine A.D."/>
        </authorList>
    </citation>
    <scope>PARTIAL PROTEIN SEQUENCE</scope>
    <scope>DISULFIDE BONDS</scope>
</reference>
<reference key="7">
    <citation type="journal article" date="1996" name="Immunity">
        <title>Stat6 is required for mediating responses to IL-4 and for development of Th2 cells.</title>
        <authorList>
            <person name="Kaplan M.H."/>
            <person name="Schindler U."/>
            <person name="Smiley S.T."/>
            <person name="Grusby M.J."/>
        </authorList>
    </citation>
    <scope>FUNCTION</scope>
</reference>
<reference key="8">
    <citation type="journal article" date="2015" name="J. Biol. Chem.">
        <title>Th2 Cytokines Augment IL-31/IL-31RA Interactions via STAT6-dependent IL-31RA Expression.</title>
        <authorList>
            <person name="Edukulla R."/>
            <person name="Singh B."/>
            <person name="Jegga A.G."/>
            <person name="Sontake V."/>
            <person name="Dillon S.R."/>
            <person name="Madala S.K."/>
        </authorList>
    </citation>
    <scope>FUNCTION</scope>
</reference>
<reference key="9">
    <citation type="journal article" date="2015" name="J. Cell Biol.">
        <title>RUN and FYVE domain-containing protein 4 enhances autophagy and lysosome tethering in response to Interleukin-4.</title>
        <authorList>
            <person name="Terawaki S."/>
            <person name="Camosseto V."/>
            <person name="Prete F."/>
            <person name="Wenger T."/>
            <person name="Papadopoulos A."/>
            <person name="Rondeau C."/>
            <person name="Combes A."/>
            <person name="Rodriguez Rodrigues C."/>
            <person name="Vu Manh T.P."/>
            <person name="Fallet M."/>
            <person name="English L."/>
            <person name="Santamaria R."/>
            <person name="Soares A.R."/>
            <person name="Weil T."/>
            <person name="Hammad H."/>
            <person name="Desjardins M."/>
            <person name="Gorvel J.P."/>
            <person name="Santos M.A."/>
            <person name="Gatti E."/>
            <person name="Pierre P."/>
        </authorList>
    </citation>
    <scope>FUNCTION</scope>
</reference>
<reference key="10">
    <citation type="journal article" date="2015" name="Behav. Genet.">
        <title>IL-4 Knock Out Mice Display Anxiety-Like Behavior.</title>
        <authorList>
            <person name="Moon M.L."/>
            <person name="Joesting J.J."/>
            <person name="Blevins N.A."/>
            <person name="Lawson M.A."/>
            <person name="Gainey S.J."/>
            <person name="Towers A.E."/>
            <person name="McNeil L.K."/>
            <person name="Freund G.G."/>
        </authorList>
    </citation>
    <scope>FUNCTION</scope>
    <scope>DISRUPTION PHENOTYPE</scope>
</reference>
<reference key="11">
    <citation type="journal article" date="2017" name="J. Immunol.">
        <title>IL-13-Mediated Regulation of Learning and Memory.</title>
        <authorList>
            <person name="Brombacher T.M."/>
            <person name="Nono J.K."/>
            <person name="De Gouveia K.S."/>
            <person name="Makena N."/>
            <person name="Darby M."/>
            <person name="Womersley J."/>
            <person name="Tamgue O."/>
            <person name="Brombacher F."/>
        </authorList>
    </citation>
    <scope>FUNCTION</scope>
    <scope>DISRUPTION PHENOTYPE</scope>
</reference>
<feature type="signal peptide">
    <location>
        <begin position="1"/>
        <end position="20"/>
    </location>
</feature>
<feature type="chain" id="PRO_0000015538" description="Interleukin-4">
    <location>
        <begin position="21"/>
        <end position="140"/>
    </location>
</feature>
<feature type="glycosylation site" description="N-linked (GlcNAc...) asparagine" evidence="2">
    <location>
        <position position="61"/>
    </location>
</feature>
<feature type="glycosylation site" description="N-linked (GlcNAc...) asparagine" evidence="2">
    <location>
        <position position="91"/>
    </location>
</feature>
<feature type="glycosylation site" description="N-linked (GlcNAc...) asparagine" evidence="2">
    <location>
        <position position="117"/>
    </location>
</feature>
<feature type="disulfide bond" evidence="3">
    <location>
        <begin position="25"/>
        <end position="107"/>
    </location>
</feature>
<feature type="disulfide bond" evidence="3">
    <location>
        <begin position="47"/>
        <end position="87"/>
    </location>
</feature>
<feature type="disulfide bond" evidence="3">
    <location>
        <begin position="69"/>
        <end position="114"/>
    </location>
</feature>
<accession>P07750</accession>
<sequence length="140" mass="15834">MGLNPQLVVILLFFLECTRSHIHGCDKNHLREIIGILNEVTGEGTPCTEMDVPNVLTATKNTTESELVCRASKVLRIFYLKHGKTPCLKKNSSVLMELQRLFRAFRCLDSSISCTMNESKSTSLKDFLESLKSIMQMDYS</sequence>
<protein>
    <recommendedName>
        <fullName>Interleukin-4</fullName>
        <shortName>IL-4</shortName>
    </recommendedName>
    <alternativeName>
        <fullName>B-cell IgG differentiation factor</fullName>
    </alternativeName>
    <alternativeName>
        <fullName>B-cell growth factor 1</fullName>
    </alternativeName>
    <alternativeName>
        <fullName>B-cell stimulatory factor 1</fullName>
        <shortName>BSF-1</shortName>
    </alternativeName>
    <alternativeName>
        <fullName>IGG1 induction factor</fullName>
    </alternativeName>
    <alternativeName>
        <fullName>Lymphocyte stimulatory factor 1</fullName>
    </alternativeName>
</protein>
<name>IL4_MOUSE</name>
<keyword id="KW-0072">Autophagy</keyword>
<keyword id="KW-0075">B-cell activation</keyword>
<keyword id="KW-0202">Cytokine</keyword>
<keyword id="KW-0903">Direct protein sequencing</keyword>
<keyword id="KW-1015">Disulfide bond</keyword>
<keyword id="KW-0325">Glycoprotein</keyword>
<keyword id="KW-0339">Growth factor</keyword>
<keyword id="KW-1185">Reference proteome</keyword>
<keyword id="KW-0964">Secreted</keyword>
<keyword id="KW-0732">Signal</keyword>
<organism>
    <name type="scientific">Mus musculus</name>
    <name type="common">Mouse</name>
    <dbReference type="NCBI Taxonomy" id="10090"/>
    <lineage>
        <taxon>Eukaryota</taxon>
        <taxon>Metazoa</taxon>
        <taxon>Chordata</taxon>
        <taxon>Craniata</taxon>
        <taxon>Vertebrata</taxon>
        <taxon>Euteleostomi</taxon>
        <taxon>Mammalia</taxon>
        <taxon>Eutheria</taxon>
        <taxon>Euarchontoglires</taxon>
        <taxon>Glires</taxon>
        <taxon>Rodentia</taxon>
        <taxon>Myomorpha</taxon>
        <taxon>Muroidea</taxon>
        <taxon>Muridae</taxon>
        <taxon>Murinae</taxon>
        <taxon>Mus</taxon>
        <taxon>Mus</taxon>
    </lineage>
</organism>
<evidence type="ECO:0000250" key="1">
    <source>
        <dbReference type="UniProtKB" id="P05112"/>
    </source>
</evidence>
<evidence type="ECO:0000255" key="2"/>
<evidence type="ECO:0000269" key="3">
    <source>
    </source>
</evidence>
<evidence type="ECO:0000269" key="4">
    <source>
    </source>
</evidence>
<evidence type="ECO:0000269" key="5">
    <source>
    </source>
</evidence>
<evidence type="ECO:0000269" key="6">
    <source>
    </source>
</evidence>
<evidence type="ECO:0000269" key="7">
    <source>
    </source>
</evidence>
<evidence type="ECO:0000269" key="8">
    <source>
    </source>
</evidence>
<evidence type="ECO:0000269" key="9">
    <source>
    </source>
</evidence>
<evidence type="ECO:0000305" key="10"/>
<proteinExistence type="evidence at protein level"/>